<reference key="1">
    <citation type="journal article" date="2009" name="PLoS Genet.">
        <title>Organised genome dynamics in the Escherichia coli species results in highly diverse adaptive paths.</title>
        <authorList>
            <person name="Touchon M."/>
            <person name="Hoede C."/>
            <person name="Tenaillon O."/>
            <person name="Barbe V."/>
            <person name="Baeriswyl S."/>
            <person name="Bidet P."/>
            <person name="Bingen E."/>
            <person name="Bonacorsi S."/>
            <person name="Bouchier C."/>
            <person name="Bouvet O."/>
            <person name="Calteau A."/>
            <person name="Chiapello H."/>
            <person name="Clermont O."/>
            <person name="Cruveiller S."/>
            <person name="Danchin A."/>
            <person name="Diard M."/>
            <person name="Dossat C."/>
            <person name="Karoui M.E."/>
            <person name="Frapy E."/>
            <person name="Garry L."/>
            <person name="Ghigo J.M."/>
            <person name="Gilles A.M."/>
            <person name="Johnson J."/>
            <person name="Le Bouguenec C."/>
            <person name="Lescat M."/>
            <person name="Mangenot S."/>
            <person name="Martinez-Jehanne V."/>
            <person name="Matic I."/>
            <person name="Nassif X."/>
            <person name="Oztas S."/>
            <person name="Petit M.A."/>
            <person name="Pichon C."/>
            <person name="Rouy Z."/>
            <person name="Ruf C.S."/>
            <person name="Schneider D."/>
            <person name="Tourret J."/>
            <person name="Vacherie B."/>
            <person name="Vallenet D."/>
            <person name="Medigue C."/>
            <person name="Rocha E.P.C."/>
            <person name="Denamur E."/>
        </authorList>
    </citation>
    <scope>NUCLEOTIDE SEQUENCE [LARGE SCALE GENOMIC DNA]</scope>
    <source>
        <strain>S88 / ExPEC</strain>
    </source>
</reference>
<dbReference type="EMBL" id="CU928161">
    <property type="protein sequence ID" value="CAR04049.1"/>
    <property type="molecule type" value="Genomic_DNA"/>
</dbReference>
<dbReference type="RefSeq" id="WP_000256450.1">
    <property type="nucleotide sequence ID" value="NC_011742.1"/>
</dbReference>
<dbReference type="EMDB" id="EMD-0643"/>
<dbReference type="EMDB" id="EMD-0661"/>
<dbReference type="EMDB" id="EMD-0662"/>
<dbReference type="EMDB" id="EMD-20056"/>
<dbReference type="EMDB" id="EMD-20057"/>
<dbReference type="EMDB" id="EMD-20058"/>
<dbReference type="EMDB" id="EMD-20121"/>
<dbReference type="EMDB" id="EMD-20173"/>
<dbReference type="EMDB" id="EMD-20174"/>
<dbReference type="EMDB" id="EMD-20184"/>
<dbReference type="EMDB" id="EMD-20187"/>
<dbReference type="EMDB" id="EMD-20188"/>
<dbReference type="EMDB" id="EMD-20193"/>
<dbReference type="EMDB" id="EMD-20204"/>
<dbReference type="EMDB" id="EMD-21386"/>
<dbReference type="EMDB" id="EMD-21468"/>
<dbReference type="EMDB" id="EMD-21469"/>
<dbReference type="EMDB" id="EMD-21470"/>
<dbReference type="EMDB" id="EMD-21471"/>
<dbReference type="EMDB" id="EMD-21472"/>
<dbReference type="EMDB" id="EMD-21474"/>
<dbReference type="EMDB" id="EMD-21475"/>
<dbReference type="EMDB" id="EMD-21476"/>
<dbReference type="EMDB" id="EMD-21477"/>
<dbReference type="EMDB" id="EMD-21482"/>
<dbReference type="EMDB" id="EMD-21483"/>
<dbReference type="EMDB" id="EMD-21485"/>
<dbReference type="EMDB" id="EMD-21486"/>
<dbReference type="EMDB" id="EMD-21494"/>
<dbReference type="EMDB" id="EMD-21619"/>
<dbReference type="EMDB" id="EMD-21620"/>
<dbReference type="EMDB" id="EMD-21621"/>
<dbReference type="EMDB" id="EMD-21622"/>
<dbReference type="EMDB" id="EMD-21623"/>
<dbReference type="EMDB" id="EMD-21624"/>
<dbReference type="EMDB" id="EMD-21626"/>
<dbReference type="EMDB" id="EMD-21627"/>
<dbReference type="EMDB" id="EMD-21628"/>
<dbReference type="EMDB" id="EMD-21629"/>
<dbReference type="EMDB" id="EMD-22082"/>
<dbReference type="EMDB" id="EMD-22084"/>
<dbReference type="EMDB" id="EMD-22087"/>
<dbReference type="EMDB" id="EMD-22107"/>
<dbReference type="EMDB" id="EMD-22141"/>
<dbReference type="EMDB" id="EMD-22142"/>
<dbReference type="EMDB" id="EMD-22181"/>
<dbReference type="EMDB" id="EMD-22192"/>
<dbReference type="EMDB" id="EMD-22193"/>
<dbReference type="EMDB" id="EMD-22586"/>
<dbReference type="EMDB" id="EMD-23673"/>
<dbReference type="EMDB" id="EMD-24800"/>
<dbReference type="EMDB" id="EMD-24801"/>
<dbReference type="EMDB" id="EMD-24802"/>
<dbReference type="EMDB" id="EMD-24804"/>
<dbReference type="EMDB" id="EMD-24944"/>
<dbReference type="EMDB" id="EMD-26037"/>
<dbReference type="EMDB" id="EMD-26486"/>
<dbReference type="EMDB" id="EMD-7014"/>
<dbReference type="EMDB" id="EMD-7015"/>
<dbReference type="EMDB" id="EMD-7016"/>
<dbReference type="EMDB" id="EMD-7970"/>
<dbReference type="EMDB" id="EMD-8521"/>
<dbReference type="EMDB" id="EMD-8522"/>
<dbReference type="EMDB" id="EMD-8621"/>
<dbReference type="EMDB" id="EMD-8826"/>
<dbReference type="EMDB" id="EMD-8829"/>
<dbReference type="SMR" id="B7MIU7"/>
<dbReference type="IntAct" id="B7MIU7">
    <property type="interactions" value="2"/>
</dbReference>
<dbReference type="GeneID" id="93774459"/>
<dbReference type="KEGG" id="ecz:ECS88_2795"/>
<dbReference type="HOGENOM" id="CLU_100590_5_1_6"/>
<dbReference type="Proteomes" id="UP000000747">
    <property type="component" value="Chromosome"/>
</dbReference>
<dbReference type="GO" id="GO:0005737">
    <property type="term" value="C:cytoplasm"/>
    <property type="evidence" value="ECO:0007669"/>
    <property type="project" value="UniProtKB-ARBA"/>
</dbReference>
<dbReference type="GO" id="GO:0015935">
    <property type="term" value="C:small ribosomal subunit"/>
    <property type="evidence" value="ECO:0007669"/>
    <property type="project" value="TreeGrafter"/>
</dbReference>
<dbReference type="GO" id="GO:0003735">
    <property type="term" value="F:structural constituent of ribosome"/>
    <property type="evidence" value="ECO:0007669"/>
    <property type="project" value="InterPro"/>
</dbReference>
<dbReference type="GO" id="GO:0006412">
    <property type="term" value="P:translation"/>
    <property type="evidence" value="ECO:0007669"/>
    <property type="project" value="UniProtKB-UniRule"/>
</dbReference>
<dbReference type="FunFam" id="3.30.1320.10:FF:000001">
    <property type="entry name" value="30S ribosomal protein S16"/>
    <property type="match status" value="1"/>
</dbReference>
<dbReference type="Gene3D" id="3.30.1320.10">
    <property type="match status" value="1"/>
</dbReference>
<dbReference type="HAMAP" id="MF_00385">
    <property type="entry name" value="Ribosomal_bS16"/>
    <property type="match status" value="1"/>
</dbReference>
<dbReference type="InterPro" id="IPR000307">
    <property type="entry name" value="Ribosomal_bS16"/>
</dbReference>
<dbReference type="InterPro" id="IPR020592">
    <property type="entry name" value="Ribosomal_bS16_CS"/>
</dbReference>
<dbReference type="InterPro" id="IPR023803">
    <property type="entry name" value="Ribosomal_bS16_dom_sf"/>
</dbReference>
<dbReference type="NCBIfam" id="TIGR00002">
    <property type="entry name" value="S16"/>
    <property type="match status" value="1"/>
</dbReference>
<dbReference type="PANTHER" id="PTHR12919">
    <property type="entry name" value="30S RIBOSOMAL PROTEIN S16"/>
    <property type="match status" value="1"/>
</dbReference>
<dbReference type="PANTHER" id="PTHR12919:SF20">
    <property type="entry name" value="SMALL RIBOSOMAL SUBUNIT PROTEIN BS16M"/>
    <property type="match status" value="1"/>
</dbReference>
<dbReference type="Pfam" id="PF00886">
    <property type="entry name" value="Ribosomal_S16"/>
    <property type="match status" value="1"/>
</dbReference>
<dbReference type="SUPFAM" id="SSF54565">
    <property type="entry name" value="Ribosomal protein S16"/>
    <property type="match status" value="1"/>
</dbReference>
<dbReference type="PROSITE" id="PS00732">
    <property type="entry name" value="RIBOSOMAL_S16"/>
    <property type="match status" value="1"/>
</dbReference>
<comment type="similarity">
    <text evidence="1">Belongs to the bacterial ribosomal protein bS16 family.</text>
</comment>
<proteinExistence type="inferred from homology"/>
<evidence type="ECO:0000255" key="1">
    <source>
        <dbReference type="HAMAP-Rule" id="MF_00385"/>
    </source>
</evidence>
<evidence type="ECO:0000305" key="2"/>
<protein>
    <recommendedName>
        <fullName evidence="1">Small ribosomal subunit protein bS16</fullName>
    </recommendedName>
    <alternativeName>
        <fullName evidence="2">30S ribosomal protein S16</fullName>
    </alternativeName>
</protein>
<gene>
    <name evidence="1" type="primary">rpsP</name>
    <name type="ordered locus">ECS88_2795</name>
</gene>
<sequence length="82" mass="9191">MVTIRLARHGAKKRPFYQVVVADSRNARNGRFIERVGFFNPIASEKEEGTRLDLDRIAHWVGQGATISDRVAALIKEVNKAA</sequence>
<organism>
    <name type="scientific">Escherichia coli O45:K1 (strain S88 / ExPEC)</name>
    <dbReference type="NCBI Taxonomy" id="585035"/>
    <lineage>
        <taxon>Bacteria</taxon>
        <taxon>Pseudomonadati</taxon>
        <taxon>Pseudomonadota</taxon>
        <taxon>Gammaproteobacteria</taxon>
        <taxon>Enterobacterales</taxon>
        <taxon>Enterobacteriaceae</taxon>
        <taxon>Escherichia</taxon>
    </lineage>
</organism>
<accession>B7MIU7</accession>
<name>RS16_ECO45</name>
<keyword id="KW-1185">Reference proteome</keyword>
<keyword id="KW-0687">Ribonucleoprotein</keyword>
<keyword id="KW-0689">Ribosomal protein</keyword>
<feature type="chain" id="PRO_1000196402" description="Small ribosomal subunit protein bS16">
    <location>
        <begin position="1"/>
        <end position="82"/>
    </location>
</feature>